<sequence>MAKNIQAIRGMNDYLPGETAIWQRIEGTLKNVLGSYGYSEIRLPIVEQTPLFKRAIGEVTDVVEKEMYTFEDRNGDSLTLRPEGTAGCVRAGIEHGLLYNQEQRLWYIGPMFRHERPQKGRYRQFHQLGAEVFGLQGPDIDAELIMLTARWWRALGIAEHVSLELNSIGSLEARANYRDALVAFLEQHQETLDEDCKRRMYTNPLRVLDSKNPDVQALLNDAPVLGDYLDDDSREHFAGLCKLLDAAGIAYTVNQRLVRGLDYYNRTVFEWVTNSLGSQGTVCAGGRYDGLVEQLGGRATPAVGFAMGLERLVLLVQAVNPEFIASPVVDIYLVAAGAQTQSAAMTLAERLRDEMPGVKLMTNHGGGNFKKQFARADKWGARIALVLGESEVADGTVVVKDLRSGEQTAVAQDSVAAHLRTLLG</sequence>
<gene>
    <name evidence="1" type="primary">hisS</name>
    <name type="ordered locus">SeHA_C2779</name>
</gene>
<proteinExistence type="inferred from homology"/>
<evidence type="ECO:0000255" key="1">
    <source>
        <dbReference type="HAMAP-Rule" id="MF_00127"/>
    </source>
</evidence>
<feature type="chain" id="PRO_1000095588" description="Histidine--tRNA ligase">
    <location>
        <begin position="1"/>
        <end position="424"/>
    </location>
</feature>
<comment type="catalytic activity">
    <reaction evidence="1">
        <text>tRNA(His) + L-histidine + ATP = L-histidyl-tRNA(His) + AMP + diphosphate + H(+)</text>
        <dbReference type="Rhea" id="RHEA:17313"/>
        <dbReference type="Rhea" id="RHEA-COMP:9665"/>
        <dbReference type="Rhea" id="RHEA-COMP:9689"/>
        <dbReference type="ChEBI" id="CHEBI:15378"/>
        <dbReference type="ChEBI" id="CHEBI:30616"/>
        <dbReference type="ChEBI" id="CHEBI:33019"/>
        <dbReference type="ChEBI" id="CHEBI:57595"/>
        <dbReference type="ChEBI" id="CHEBI:78442"/>
        <dbReference type="ChEBI" id="CHEBI:78527"/>
        <dbReference type="ChEBI" id="CHEBI:456215"/>
        <dbReference type="EC" id="6.1.1.21"/>
    </reaction>
</comment>
<comment type="subunit">
    <text evidence="1">Homodimer.</text>
</comment>
<comment type="subcellular location">
    <subcellularLocation>
        <location evidence="1">Cytoplasm</location>
    </subcellularLocation>
</comment>
<comment type="similarity">
    <text evidence="1">Belongs to the class-II aminoacyl-tRNA synthetase family.</text>
</comment>
<accession>B4TD92</accession>
<name>SYH_SALHS</name>
<dbReference type="EC" id="6.1.1.21" evidence="1"/>
<dbReference type="EMBL" id="CP001120">
    <property type="protein sequence ID" value="ACF68818.1"/>
    <property type="molecule type" value="Genomic_DNA"/>
</dbReference>
<dbReference type="RefSeq" id="WP_001107144.1">
    <property type="nucleotide sequence ID" value="NC_011083.1"/>
</dbReference>
<dbReference type="SMR" id="B4TD92"/>
<dbReference type="KEGG" id="seh:SeHA_C2779"/>
<dbReference type="HOGENOM" id="CLU_025113_1_1_6"/>
<dbReference type="Proteomes" id="UP000001866">
    <property type="component" value="Chromosome"/>
</dbReference>
<dbReference type="GO" id="GO:0005737">
    <property type="term" value="C:cytoplasm"/>
    <property type="evidence" value="ECO:0007669"/>
    <property type="project" value="UniProtKB-SubCell"/>
</dbReference>
<dbReference type="GO" id="GO:0005524">
    <property type="term" value="F:ATP binding"/>
    <property type="evidence" value="ECO:0007669"/>
    <property type="project" value="UniProtKB-UniRule"/>
</dbReference>
<dbReference type="GO" id="GO:0004821">
    <property type="term" value="F:histidine-tRNA ligase activity"/>
    <property type="evidence" value="ECO:0007669"/>
    <property type="project" value="UniProtKB-UniRule"/>
</dbReference>
<dbReference type="GO" id="GO:0006427">
    <property type="term" value="P:histidyl-tRNA aminoacylation"/>
    <property type="evidence" value="ECO:0007669"/>
    <property type="project" value="UniProtKB-UniRule"/>
</dbReference>
<dbReference type="CDD" id="cd00773">
    <property type="entry name" value="HisRS-like_core"/>
    <property type="match status" value="1"/>
</dbReference>
<dbReference type="CDD" id="cd00859">
    <property type="entry name" value="HisRS_anticodon"/>
    <property type="match status" value="1"/>
</dbReference>
<dbReference type="FunFam" id="3.30.930.10:FF:000005">
    <property type="entry name" value="Histidine--tRNA ligase"/>
    <property type="match status" value="1"/>
</dbReference>
<dbReference type="FunFam" id="3.40.50.800:FF:000007">
    <property type="entry name" value="Histidine--tRNA ligase"/>
    <property type="match status" value="1"/>
</dbReference>
<dbReference type="Gene3D" id="3.40.50.800">
    <property type="entry name" value="Anticodon-binding domain"/>
    <property type="match status" value="1"/>
</dbReference>
<dbReference type="Gene3D" id="3.30.930.10">
    <property type="entry name" value="Bira Bifunctional Protein, Domain 2"/>
    <property type="match status" value="1"/>
</dbReference>
<dbReference type="HAMAP" id="MF_00127">
    <property type="entry name" value="His_tRNA_synth"/>
    <property type="match status" value="1"/>
</dbReference>
<dbReference type="InterPro" id="IPR006195">
    <property type="entry name" value="aa-tRNA-synth_II"/>
</dbReference>
<dbReference type="InterPro" id="IPR045864">
    <property type="entry name" value="aa-tRNA-synth_II/BPL/LPL"/>
</dbReference>
<dbReference type="InterPro" id="IPR004154">
    <property type="entry name" value="Anticodon-bd"/>
</dbReference>
<dbReference type="InterPro" id="IPR036621">
    <property type="entry name" value="Anticodon-bd_dom_sf"/>
</dbReference>
<dbReference type="InterPro" id="IPR015807">
    <property type="entry name" value="His-tRNA-ligase"/>
</dbReference>
<dbReference type="InterPro" id="IPR041715">
    <property type="entry name" value="HisRS-like_core"/>
</dbReference>
<dbReference type="InterPro" id="IPR004516">
    <property type="entry name" value="HisRS/HisZ"/>
</dbReference>
<dbReference type="InterPro" id="IPR033656">
    <property type="entry name" value="HisRS_anticodon"/>
</dbReference>
<dbReference type="NCBIfam" id="TIGR00442">
    <property type="entry name" value="hisS"/>
    <property type="match status" value="1"/>
</dbReference>
<dbReference type="PANTHER" id="PTHR43707:SF1">
    <property type="entry name" value="HISTIDINE--TRNA LIGASE, MITOCHONDRIAL-RELATED"/>
    <property type="match status" value="1"/>
</dbReference>
<dbReference type="PANTHER" id="PTHR43707">
    <property type="entry name" value="HISTIDYL-TRNA SYNTHETASE"/>
    <property type="match status" value="1"/>
</dbReference>
<dbReference type="Pfam" id="PF03129">
    <property type="entry name" value="HGTP_anticodon"/>
    <property type="match status" value="1"/>
</dbReference>
<dbReference type="Pfam" id="PF13393">
    <property type="entry name" value="tRNA-synt_His"/>
    <property type="match status" value="1"/>
</dbReference>
<dbReference type="PIRSF" id="PIRSF001549">
    <property type="entry name" value="His-tRNA_synth"/>
    <property type="match status" value="1"/>
</dbReference>
<dbReference type="SUPFAM" id="SSF52954">
    <property type="entry name" value="Class II aaRS ABD-related"/>
    <property type="match status" value="1"/>
</dbReference>
<dbReference type="SUPFAM" id="SSF55681">
    <property type="entry name" value="Class II aaRS and biotin synthetases"/>
    <property type="match status" value="1"/>
</dbReference>
<dbReference type="PROSITE" id="PS50862">
    <property type="entry name" value="AA_TRNA_LIGASE_II"/>
    <property type="match status" value="1"/>
</dbReference>
<keyword id="KW-0030">Aminoacyl-tRNA synthetase</keyword>
<keyword id="KW-0067">ATP-binding</keyword>
<keyword id="KW-0963">Cytoplasm</keyword>
<keyword id="KW-0436">Ligase</keyword>
<keyword id="KW-0547">Nucleotide-binding</keyword>
<keyword id="KW-0648">Protein biosynthesis</keyword>
<organism>
    <name type="scientific">Salmonella heidelberg (strain SL476)</name>
    <dbReference type="NCBI Taxonomy" id="454169"/>
    <lineage>
        <taxon>Bacteria</taxon>
        <taxon>Pseudomonadati</taxon>
        <taxon>Pseudomonadota</taxon>
        <taxon>Gammaproteobacteria</taxon>
        <taxon>Enterobacterales</taxon>
        <taxon>Enterobacteriaceae</taxon>
        <taxon>Salmonella</taxon>
    </lineage>
</organism>
<reference key="1">
    <citation type="journal article" date="2011" name="J. Bacteriol.">
        <title>Comparative genomics of 28 Salmonella enterica isolates: evidence for CRISPR-mediated adaptive sublineage evolution.</title>
        <authorList>
            <person name="Fricke W.F."/>
            <person name="Mammel M.K."/>
            <person name="McDermott P.F."/>
            <person name="Tartera C."/>
            <person name="White D.G."/>
            <person name="Leclerc J.E."/>
            <person name="Ravel J."/>
            <person name="Cebula T.A."/>
        </authorList>
    </citation>
    <scope>NUCLEOTIDE SEQUENCE [LARGE SCALE GENOMIC DNA]</scope>
    <source>
        <strain>SL476</strain>
    </source>
</reference>
<protein>
    <recommendedName>
        <fullName evidence="1">Histidine--tRNA ligase</fullName>
        <ecNumber evidence="1">6.1.1.21</ecNumber>
    </recommendedName>
    <alternativeName>
        <fullName evidence="1">Histidyl-tRNA synthetase</fullName>
        <shortName evidence="1">HisRS</shortName>
    </alternativeName>
</protein>